<protein>
    <recommendedName>
        <fullName>Sucrose operon repressor</fullName>
    </recommendedName>
    <alternativeName>
        <fullName>Scr operon regulatory protein</fullName>
    </alternativeName>
</protein>
<comment type="function">
    <text>This protein may control the expression of the genes that are involved in the transport and catabolism of sucrose.</text>
</comment>
<reference key="1">
    <citation type="journal article" date="1995" name="Appl. Environ. Microbiol.">
        <title>Genes involved in immunity to the lantibiotic nisin produced by Lactococcus lactis 6F3.</title>
        <authorList>
            <person name="Siegers K."/>
            <person name="Entian K.-D."/>
        </authorList>
    </citation>
    <scope>NUCLEOTIDE SEQUENCE [GENOMIC DNA]</scope>
    <source>
        <strain>6F3</strain>
    </source>
</reference>
<reference key="2">
    <citation type="journal article" date="1992" name="Gene">
        <title>Transcriptional regulation of the Tn5276-located Lactococcus lactis sucrose operon and characterization of the sacA gene encoding sucrose-6-phosphate hydrolase.</title>
        <authorList>
            <person name="Rauch P.J."/>
            <person name="de Vos W.M."/>
        </authorList>
    </citation>
    <scope>NUCLEOTIDE SEQUENCE [GENOMIC DNA] OF 1-27</scope>
    <source>
        <strain>NIZO R5</strain>
    </source>
</reference>
<gene>
    <name type="primary">sacR</name>
</gene>
<name>SACR_LACLL</name>
<organism>
    <name type="scientific">Lactococcus lactis subsp. lactis</name>
    <name type="common">Streptococcus lactis</name>
    <dbReference type="NCBI Taxonomy" id="1360"/>
    <lineage>
        <taxon>Bacteria</taxon>
        <taxon>Bacillati</taxon>
        <taxon>Bacillota</taxon>
        <taxon>Bacilli</taxon>
        <taxon>Lactobacillales</taxon>
        <taxon>Streptococcaceae</taxon>
        <taxon>Lactococcus</taxon>
    </lineage>
</organism>
<proteinExistence type="predicted"/>
<keyword id="KW-0238">DNA-binding</keyword>
<keyword id="KW-0678">Repressor</keyword>
<keyword id="KW-0804">Transcription</keyword>
<keyword id="KW-0805">Transcription regulation</keyword>
<sequence length="318" mass="35671">MIKLEDVANKAGVSVTTVSRVINRKGYLSDATISKVEKAMQDLHYIPNAAARSLQGKSLKLIGLVFPTIKNIFYAELIEKIEQALFIRGYKAMLATTEHDEQKERDYLALLLSNQVDGIIYGSHNLKAHDYIAIEAPIVAFDRLLTPETTVVSSDNFEGGILATKALINSGSKKIAIFTGNDNTNSPTYLRRDGYLLELERNQLKTHIIKIPSQWTLLRKKVEIKKILENNDFDGVFCTDDLTAILVKDLASNLKKSLNVVGFDGTEFIENYYPNLTTIKQPINDLAELLVDLIIRKIDGDNIDITYQLPVQLHYGID</sequence>
<evidence type="ECO:0000255" key="1">
    <source>
        <dbReference type="PROSITE-ProRule" id="PRU00111"/>
    </source>
</evidence>
<feature type="chain" id="PRO_0000107998" description="Sucrose operon repressor">
    <location>
        <begin position="1"/>
        <end position="318"/>
    </location>
</feature>
<feature type="domain" description="HTH lacI-type" evidence="1">
    <location>
        <begin position="1"/>
        <end position="56"/>
    </location>
</feature>
<feature type="DNA-binding region" description="H-T-H motif" evidence="1">
    <location>
        <begin position="4"/>
        <end position="23"/>
    </location>
</feature>
<feature type="sequence variant" description="In strain: NIZO R5.">
    <original>Y</original>
    <variation>C</variation>
    <location>
        <position position="27"/>
    </location>
</feature>
<accession>Q04939</accession>
<dbReference type="EMBL" id="U17255">
    <property type="protein sequence ID" value="AAC43330.1"/>
    <property type="molecule type" value="Genomic_DNA"/>
</dbReference>
<dbReference type="EMBL" id="M96669">
    <property type="protein sequence ID" value="AAA25219.1"/>
    <property type="molecule type" value="Genomic_DNA"/>
</dbReference>
<dbReference type="PIR" id="JH0755">
    <property type="entry name" value="JH0755"/>
</dbReference>
<dbReference type="SMR" id="Q04939"/>
<dbReference type="GO" id="GO:0003700">
    <property type="term" value="F:DNA-binding transcription factor activity"/>
    <property type="evidence" value="ECO:0007669"/>
    <property type="project" value="TreeGrafter"/>
</dbReference>
<dbReference type="GO" id="GO:0000976">
    <property type="term" value="F:transcription cis-regulatory region binding"/>
    <property type="evidence" value="ECO:0007669"/>
    <property type="project" value="TreeGrafter"/>
</dbReference>
<dbReference type="CDD" id="cd01392">
    <property type="entry name" value="HTH_LacI"/>
    <property type="match status" value="1"/>
</dbReference>
<dbReference type="CDD" id="cd06291">
    <property type="entry name" value="PBP1_Qymf-like"/>
    <property type="match status" value="1"/>
</dbReference>
<dbReference type="Gene3D" id="3.40.50.2300">
    <property type="match status" value="2"/>
</dbReference>
<dbReference type="Gene3D" id="1.10.260.40">
    <property type="entry name" value="lambda repressor-like DNA-binding domains"/>
    <property type="match status" value="1"/>
</dbReference>
<dbReference type="InterPro" id="IPR001387">
    <property type="entry name" value="Cro/C1-type_HTH"/>
</dbReference>
<dbReference type="InterPro" id="IPR000843">
    <property type="entry name" value="HTH_LacI"/>
</dbReference>
<dbReference type="InterPro" id="IPR010982">
    <property type="entry name" value="Lambda_DNA-bd_dom_sf"/>
</dbReference>
<dbReference type="InterPro" id="IPR028082">
    <property type="entry name" value="Peripla_BP_I"/>
</dbReference>
<dbReference type="InterPro" id="IPR025997">
    <property type="entry name" value="SBP_2_dom"/>
</dbReference>
<dbReference type="PANTHER" id="PTHR30146">
    <property type="entry name" value="LACI-RELATED TRANSCRIPTIONAL REPRESSOR"/>
    <property type="match status" value="1"/>
</dbReference>
<dbReference type="PANTHER" id="PTHR30146:SF95">
    <property type="entry name" value="RIBOSE OPERON REPRESSOR"/>
    <property type="match status" value="1"/>
</dbReference>
<dbReference type="Pfam" id="PF00356">
    <property type="entry name" value="LacI"/>
    <property type="match status" value="1"/>
</dbReference>
<dbReference type="Pfam" id="PF13407">
    <property type="entry name" value="Peripla_BP_4"/>
    <property type="match status" value="1"/>
</dbReference>
<dbReference type="PRINTS" id="PR00036">
    <property type="entry name" value="HTHLACI"/>
</dbReference>
<dbReference type="SMART" id="SM00354">
    <property type="entry name" value="HTH_LACI"/>
    <property type="match status" value="1"/>
</dbReference>
<dbReference type="SUPFAM" id="SSF47413">
    <property type="entry name" value="lambda repressor-like DNA-binding domains"/>
    <property type="match status" value="1"/>
</dbReference>
<dbReference type="SUPFAM" id="SSF53822">
    <property type="entry name" value="Periplasmic binding protein-like I"/>
    <property type="match status" value="1"/>
</dbReference>
<dbReference type="PROSITE" id="PS00356">
    <property type="entry name" value="HTH_LACI_1"/>
    <property type="match status" value="1"/>
</dbReference>
<dbReference type="PROSITE" id="PS50932">
    <property type="entry name" value="HTH_LACI_2"/>
    <property type="match status" value="1"/>
</dbReference>